<name>PAND_PSEAB</name>
<feature type="chain" id="PRO_0000307051" description="Aspartate 1-decarboxylase beta chain" evidence="1">
    <location>
        <begin position="1"/>
        <end position="24"/>
    </location>
</feature>
<feature type="chain" id="PRO_0000307052" description="Aspartate 1-decarboxylase alpha chain" evidence="1">
    <location>
        <begin position="25"/>
        <end position="126"/>
    </location>
</feature>
<feature type="active site" description="Schiff-base intermediate with substrate; via pyruvic acid" evidence="1">
    <location>
        <position position="25"/>
    </location>
</feature>
<feature type="active site" description="Proton donor" evidence="1">
    <location>
        <position position="58"/>
    </location>
</feature>
<feature type="binding site" evidence="1">
    <location>
        <position position="57"/>
    </location>
    <ligand>
        <name>substrate</name>
    </ligand>
</feature>
<feature type="binding site" evidence="1">
    <location>
        <begin position="73"/>
        <end position="75"/>
    </location>
    <ligand>
        <name>substrate</name>
    </ligand>
</feature>
<feature type="modified residue" description="Pyruvic acid (Ser)" evidence="1">
    <location>
        <position position="25"/>
    </location>
</feature>
<protein>
    <recommendedName>
        <fullName evidence="1">Aspartate 1-decarboxylase</fullName>
        <ecNumber evidence="1">4.1.1.11</ecNumber>
    </recommendedName>
    <alternativeName>
        <fullName evidence="1">Aspartate alpha-decarboxylase</fullName>
    </alternativeName>
    <component>
        <recommendedName>
            <fullName evidence="1">Aspartate 1-decarboxylase beta chain</fullName>
        </recommendedName>
    </component>
    <component>
        <recommendedName>
            <fullName evidence="1">Aspartate 1-decarboxylase alpha chain</fullName>
        </recommendedName>
    </component>
</protein>
<sequence>MHAIMLKAKLHRAEVTHAVLDYEGSCAIDGDWLDLSGIREYEQIQIYNVDNGERFTTYAIRAENGSKMISVNGAAAHKAKVGDRVIICAYAHYSEAELASHKPRMLYMAPGNQLSHTSEAIPIQVA</sequence>
<gene>
    <name evidence="1" type="primary">panD</name>
    <name type="ordered locus">PA14_62600</name>
</gene>
<evidence type="ECO:0000255" key="1">
    <source>
        <dbReference type="HAMAP-Rule" id="MF_00446"/>
    </source>
</evidence>
<reference key="1">
    <citation type="journal article" date="2006" name="Genome Biol.">
        <title>Genomic analysis reveals that Pseudomonas aeruginosa virulence is combinatorial.</title>
        <authorList>
            <person name="Lee D.G."/>
            <person name="Urbach J.M."/>
            <person name="Wu G."/>
            <person name="Liberati N.T."/>
            <person name="Feinbaum R.L."/>
            <person name="Miyata S."/>
            <person name="Diggins L.T."/>
            <person name="He J."/>
            <person name="Saucier M."/>
            <person name="Deziel E."/>
            <person name="Friedman L."/>
            <person name="Li L."/>
            <person name="Grills G."/>
            <person name="Montgomery K."/>
            <person name="Kucherlapati R."/>
            <person name="Rahme L.G."/>
            <person name="Ausubel F.M."/>
        </authorList>
    </citation>
    <scope>NUCLEOTIDE SEQUENCE [LARGE SCALE GENOMIC DNA]</scope>
    <source>
        <strain>UCBPP-PA14</strain>
    </source>
</reference>
<comment type="function">
    <text evidence="1">Catalyzes the pyruvoyl-dependent decarboxylation of aspartate to produce beta-alanine.</text>
</comment>
<comment type="catalytic activity">
    <reaction evidence="1">
        <text>L-aspartate + H(+) = beta-alanine + CO2</text>
        <dbReference type="Rhea" id="RHEA:19497"/>
        <dbReference type="ChEBI" id="CHEBI:15378"/>
        <dbReference type="ChEBI" id="CHEBI:16526"/>
        <dbReference type="ChEBI" id="CHEBI:29991"/>
        <dbReference type="ChEBI" id="CHEBI:57966"/>
        <dbReference type="EC" id="4.1.1.11"/>
    </reaction>
</comment>
<comment type="cofactor">
    <cofactor evidence="1">
        <name>pyruvate</name>
        <dbReference type="ChEBI" id="CHEBI:15361"/>
    </cofactor>
    <text evidence="1">Binds 1 pyruvoyl group covalently per subunit.</text>
</comment>
<comment type="pathway">
    <text evidence="1">Cofactor biosynthesis; (R)-pantothenate biosynthesis; beta-alanine from L-aspartate: step 1/1.</text>
</comment>
<comment type="subunit">
    <text evidence="1">Heterooctamer of four alpha and four beta subunits.</text>
</comment>
<comment type="subcellular location">
    <subcellularLocation>
        <location evidence="1">Cytoplasm</location>
    </subcellularLocation>
</comment>
<comment type="PTM">
    <text evidence="1">Is synthesized initially as an inactive proenzyme, which is activated by self-cleavage at a specific serine bond to produce a beta-subunit with a hydroxyl group at its C-terminus and an alpha-subunit with a pyruvoyl group at its N-terminus.</text>
</comment>
<comment type="similarity">
    <text evidence="1">Belongs to the PanD family.</text>
</comment>
<keyword id="KW-0068">Autocatalytic cleavage</keyword>
<keyword id="KW-0963">Cytoplasm</keyword>
<keyword id="KW-0210">Decarboxylase</keyword>
<keyword id="KW-0456">Lyase</keyword>
<keyword id="KW-0566">Pantothenate biosynthesis</keyword>
<keyword id="KW-0670">Pyruvate</keyword>
<keyword id="KW-0704">Schiff base</keyword>
<keyword id="KW-0865">Zymogen</keyword>
<proteinExistence type="inferred from homology"/>
<accession>Q02FU1</accession>
<organism>
    <name type="scientific">Pseudomonas aeruginosa (strain UCBPP-PA14)</name>
    <dbReference type="NCBI Taxonomy" id="208963"/>
    <lineage>
        <taxon>Bacteria</taxon>
        <taxon>Pseudomonadati</taxon>
        <taxon>Pseudomonadota</taxon>
        <taxon>Gammaproteobacteria</taxon>
        <taxon>Pseudomonadales</taxon>
        <taxon>Pseudomonadaceae</taxon>
        <taxon>Pseudomonas</taxon>
    </lineage>
</organism>
<dbReference type="EC" id="4.1.1.11" evidence="1"/>
<dbReference type="EMBL" id="CP000438">
    <property type="protein sequence ID" value="ABJ14114.1"/>
    <property type="molecule type" value="Genomic_DNA"/>
</dbReference>
<dbReference type="RefSeq" id="WP_003095150.1">
    <property type="nucleotide sequence ID" value="NZ_CP034244.1"/>
</dbReference>
<dbReference type="SMR" id="Q02FU1"/>
<dbReference type="KEGG" id="pau:PA14_62600"/>
<dbReference type="PseudoCAP" id="PA14_62600"/>
<dbReference type="HOGENOM" id="CLU_115305_2_1_6"/>
<dbReference type="BioCyc" id="PAER208963:G1G74-5293-MONOMER"/>
<dbReference type="UniPathway" id="UPA00028">
    <property type="reaction ID" value="UER00002"/>
</dbReference>
<dbReference type="Proteomes" id="UP000000653">
    <property type="component" value="Chromosome"/>
</dbReference>
<dbReference type="GO" id="GO:0005829">
    <property type="term" value="C:cytosol"/>
    <property type="evidence" value="ECO:0007669"/>
    <property type="project" value="TreeGrafter"/>
</dbReference>
<dbReference type="GO" id="GO:0004068">
    <property type="term" value="F:aspartate 1-decarboxylase activity"/>
    <property type="evidence" value="ECO:0007669"/>
    <property type="project" value="UniProtKB-UniRule"/>
</dbReference>
<dbReference type="GO" id="GO:0006523">
    <property type="term" value="P:alanine biosynthetic process"/>
    <property type="evidence" value="ECO:0007669"/>
    <property type="project" value="InterPro"/>
</dbReference>
<dbReference type="GO" id="GO:0015940">
    <property type="term" value="P:pantothenate biosynthetic process"/>
    <property type="evidence" value="ECO:0007669"/>
    <property type="project" value="UniProtKB-UniRule"/>
</dbReference>
<dbReference type="CDD" id="cd06919">
    <property type="entry name" value="Asp_decarbox"/>
    <property type="match status" value="1"/>
</dbReference>
<dbReference type="Gene3D" id="2.40.40.20">
    <property type="match status" value="1"/>
</dbReference>
<dbReference type="HAMAP" id="MF_00446">
    <property type="entry name" value="PanD"/>
    <property type="match status" value="1"/>
</dbReference>
<dbReference type="InterPro" id="IPR009010">
    <property type="entry name" value="Asp_de-COase-like_dom_sf"/>
</dbReference>
<dbReference type="InterPro" id="IPR003190">
    <property type="entry name" value="Asp_decarbox"/>
</dbReference>
<dbReference type="NCBIfam" id="TIGR00223">
    <property type="entry name" value="panD"/>
    <property type="match status" value="1"/>
</dbReference>
<dbReference type="PANTHER" id="PTHR21012">
    <property type="entry name" value="ASPARTATE 1-DECARBOXYLASE"/>
    <property type="match status" value="1"/>
</dbReference>
<dbReference type="PANTHER" id="PTHR21012:SF0">
    <property type="entry name" value="ASPARTATE 1-DECARBOXYLASE"/>
    <property type="match status" value="1"/>
</dbReference>
<dbReference type="Pfam" id="PF02261">
    <property type="entry name" value="Asp_decarbox"/>
    <property type="match status" value="1"/>
</dbReference>
<dbReference type="PIRSF" id="PIRSF006246">
    <property type="entry name" value="Asp_decarbox"/>
    <property type="match status" value="1"/>
</dbReference>
<dbReference type="SUPFAM" id="SSF50692">
    <property type="entry name" value="ADC-like"/>
    <property type="match status" value="1"/>
</dbReference>